<dbReference type="EMBL" id="AE004439">
    <property type="protein sequence ID" value="AAK03397.1"/>
    <property type="molecule type" value="Genomic_DNA"/>
</dbReference>
<dbReference type="SMR" id="Q9CLC6"/>
<dbReference type="STRING" id="272843.PM1313"/>
<dbReference type="EnsemblBacteria" id="AAK03397">
    <property type="protein sequence ID" value="AAK03397"/>
    <property type="gene ID" value="PM1313"/>
</dbReference>
<dbReference type="KEGG" id="pmu:PM1313"/>
<dbReference type="PATRIC" id="fig|272843.6.peg.1324"/>
<dbReference type="HOGENOM" id="CLU_130694_5_0_6"/>
<dbReference type="OrthoDB" id="9800587at2"/>
<dbReference type="Proteomes" id="UP000000809">
    <property type="component" value="Chromosome"/>
</dbReference>
<dbReference type="GO" id="GO:0005737">
    <property type="term" value="C:cytoplasm"/>
    <property type="evidence" value="ECO:0007669"/>
    <property type="project" value="TreeGrafter"/>
</dbReference>
<dbReference type="Gene3D" id="3.30.1200.10">
    <property type="entry name" value="YggU-like"/>
    <property type="match status" value="1"/>
</dbReference>
<dbReference type="HAMAP" id="MF_00634">
    <property type="entry name" value="UPF0235"/>
    <property type="match status" value="1"/>
</dbReference>
<dbReference type="InterPro" id="IPR003746">
    <property type="entry name" value="DUF167"/>
</dbReference>
<dbReference type="InterPro" id="IPR036591">
    <property type="entry name" value="YggU-like_sf"/>
</dbReference>
<dbReference type="NCBIfam" id="TIGR00251">
    <property type="entry name" value="DUF167 family protein"/>
    <property type="match status" value="1"/>
</dbReference>
<dbReference type="NCBIfam" id="NF003466">
    <property type="entry name" value="PRK05090.1"/>
    <property type="match status" value="1"/>
</dbReference>
<dbReference type="PANTHER" id="PTHR13420">
    <property type="entry name" value="UPF0235 PROTEIN C15ORF40"/>
    <property type="match status" value="1"/>
</dbReference>
<dbReference type="PANTHER" id="PTHR13420:SF7">
    <property type="entry name" value="UPF0235 PROTEIN C15ORF40"/>
    <property type="match status" value="1"/>
</dbReference>
<dbReference type="Pfam" id="PF02594">
    <property type="entry name" value="DUF167"/>
    <property type="match status" value="1"/>
</dbReference>
<dbReference type="SMART" id="SM01152">
    <property type="entry name" value="DUF167"/>
    <property type="match status" value="1"/>
</dbReference>
<dbReference type="SUPFAM" id="SSF69786">
    <property type="entry name" value="YggU-like"/>
    <property type="match status" value="1"/>
</dbReference>
<comment type="similarity">
    <text evidence="1">Belongs to the UPF0235 family.</text>
</comment>
<feature type="chain" id="PRO_0000139449" description="UPF0235 protein PM1313">
    <location>
        <begin position="1"/>
        <end position="99"/>
    </location>
</feature>
<keyword id="KW-1185">Reference proteome</keyword>
<reference key="1">
    <citation type="journal article" date="2001" name="Proc. Natl. Acad. Sci. U.S.A.">
        <title>Complete genomic sequence of Pasteurella multocida Pm70.</title>
        <authorList>
            <person name="May B.J."/>
            <person name="Zhang Q."/>
            <person name="Li L.L."/>
            <person name="Paustian M.L."/>
            <person name="Whittam T.S."/>
            <person name="Kapur V."/>
        </authorList>
    </citation>
    <scope>NUCLEOTIDE SEQUENCE [LARGE SCALE GENOMIC DNA]</scope>
    <source>
        <strain>Pm70</strain>
    </source>
</reference>
<organism>
    <name type="scientific">Pasteurella multocida (strain Pm70)</name>
    <dbReference type="NCBI Taxonomy" id="272843"/>
    <lineage>
        <taxon>Bacteria</taxon>
        <taxon>Pseudomonadati</taxon>
        <taxon>Pseudomonadota</taxon>
        <taxon>Gammaproteobacteria</taxon>
        <taxon>Pasteurellales</taxon>
        <taxon>Pasteurellaceae</taxon>
        <taxon>Pasteurella</taxon>
    </lineage>
</organism>
<name>Y1313_PASMU</name>
<sequence length="99" mass="11188">MTQLPAVEKQEEHLRLRIFLQPKASKDQIVGLHDNELKITITAPPIDGQANAHLLKFLSKTFKVPKSSIVLEKGELNRHKQILIPNPKVIPTEVNVLLK</sequence>
<accession>Q9CLC6</accession>
<evidence type="ECO:0000255" key="1">
    <source>
        <dbReference type="HAMAP-Rule" id="MF_00634"/>
    </source>
</evidence>
<protein>
    <recommendedName>
        <fullName evidence="1">UPF0235 protein PM1313</fullName>
    </recommendedName>
</protein>
<proteinExistence type="inferred from homology"/>
<gene>
    <name type="ordered locus">PM1313</name>
</gene>